<organism>
    <name type="scientific">Delftia acidovorans (strain DSM 14801 / SPH-1)</name>
    <dbReference type="NCBI Taxonomy" id="398578"/>
    <lineage>
        <taxon>Bacteria</taxon>
        <taxon>Pseudomonadati</taxon>
        <taxon>Pseudomonadota</taxon>
        <taxon>Betaproteobacteria</taxon>
        <taxon>Burkholderiales</taxon>
        <taxon>Comamonadaceae</taxon>
        <taxon>Delftia</taxon>
    </lineage>
</organism>
<accession>A9BPR4</accession>
<protein>
    <recommendedName>
        <fullName evidence="1">Small ribosomal subunit protein uS7</fullName>
    </recommendedName>
    <alternativeName>
        <fullName evidence="2">30S ribosomal protein S7</fullName>
    </alternativeName>
</protein>
<evidence type="ECO:0000255" key="1">
    <source>
        <dbReference type="HAMAP-Rule" id="MF_00480"/>
    </source>
</evidence>
<evidence type="ECO:0000305" key="2"/>
<proteinExistence type="inferred from homology"/>
<gene>
    <name evidence="1" type="primary">rpsG</name>
    <name type="ordered locus">Daci_0387</name>
</gene>
<name>RS7_DELAS</name>
<keyword id="KW-1185">Reference proteome</keyword>
<keyword id="KW-0687">Ribonucleoprotein</keyword>
<keyword id="KW-0689">Ribosomal protein</keyword>
<keyword id="KW-0694">RNA-binding</keyword>
<keyword id="KW-0699">rRNA-binding</keyword>
<keyword id="KW-0820">tRNA-binding</keyword>
<dbReference type="EMBL" id="CP000884">
    <property type="protein sequence ID" value="ABX33033.1"/>
    <property type="molecule type" value="Genomic_DNA"/>
</dbReference>
<dbReference type="RefSeq" id="WP_012202326.1">
    <property type="nucleotide sequence ID" value="NC_010002.1"/>
</dbReference>
<dbReference type="SMR" id="A9BPR4"/>
<dbReference type="STRING" id="398578.Daci_0387"/>
<dbReference type="GeneID" id="24117305"/>
<dbReference type="KEGG" id="dac:Daci_0387"/>
<dbReference type="eggNOG" id="COG0049">
    <property type="taxonomic scope" value="Bacteria"/>
</dbReference>
<dbReference type="HOGENOM" id="CLU_072226_1_1_4"/>
<dbReference type="Proteomes" id="UP000000784">
    <property type="component" value="Chromosome"/>
</dbReference>
<dbReference type="GO" id="GO:0015935">
    <property type="term" value="C:small ribosomal subunit"/>
    <property type="evidence" value="ECO:0007669"/>
    <property type="project" value="InterPro"/>
</dbReference>
<dbReference type="GO" id="GO:0019843">
    <property type="term" value="F:rRNA binding"/>
    <property type="evidence" value="ECO:0007669"/>
    <property type="project" value="UniProtKB-UniRule"/>
</dbReference>
<dbReference type="GO" id="GO:0003735">
    <property type="term" value="F:structural constituent of ribosome"/>
    <property type="evidence" value="ECO:0007669"/>
    <property type="project" value="InterPro"/>
</dbReference>
<dbReference type="GO" id="GO:0000049">
    <property type="term" value="F:tRNA binding"/>
    <property type="evidence" value="ECO:0007669"/>
    <property type="project" value="UniProtKB-UniRule"/>
</dbReference>
<dbReference type="GO" id="GO:0006412">
    <property type="term" value="P:translation"/>
    <property type="evidence" value="ECO:0007669"/>
    <property type="project" value="UniProtKB-UniRule"/>
</dbReference>
<dbReference type="CDD" id="cd14869">
    <property type="entry name" value="uS7_Bacteria"/>
    <property type="match status" value="1"/>
</dbReference>
<dbReference type="FunFam" id="1.10.455.10:FF:000001">
    <property type="entry name" value="30S ribosomal protein S7"/>
    <property type="match status" value="1"/>
</dbReference>
<dbReference type="Gene3D" id="1.10.455.10">
    <property type="entry name" value="Ribosomal protein S7 domain"/>
    <property type="match status" value="1"/>
</dbReference>
<dbReference type="HAMAP" id="MF_00480_B">
    <property type="entry name" value="Ribosomal_uS7_B"/>
    <property type="match status" value="1"/>
</dbReference>
<dbReference type="InterPro" id="IPR000235">
    <property type="entry name" value="Ribosomal_uS7"/>
</dbReference>
<dbReference type="InterPro" id="IPR005717">
    <property type="entry name" value="Ribosomal_uS7_bac/org-type"/>
</dbReference>
<dbReference type="InterPro" id="IPR020606">
    <property type="entry name" value="Ribosomal_uS7_CS"/>
</dbReference>
<dbReference type="InterPro" id="IPR023798">
    <property type="entry name" value="Ribosomal_uS7_dom"/>
</dbReference>
<dbReference type="InterPro" id="IPR036823">
    <property type="entry name" value="Ribosomal_uS7_dom_sf"/>
</dbReference>
<dbReference type="NCBIfam" id="TIGR01029">
    <property type="entry name" value="rpsG_bact"/>
    <property type="match status" value="1"/>
</dbReference>
<dbReference type="PANTHER" id="PTHR11205">
    <property type="entry name" value="RIBOSOMAL PROTEIN S7"/>
    <property type="match status" value="1"/>
</dbReference>
<dbReference type="Pfam" id="PF00177">
    <property type="entry name" value="Ribosomal_S7"/>
    <property type="match status" value="1"/>
</dbReference>
<dbReference type="PIRSF" id="PIRSF002122">
    <property type="entry name" value="RPS7p_RPS7a_RPS5e_RPS7o"/>
    <property type="match status" value="1"/>
</dbReference>
<dbReference type="SUPFAM" id="SSF47973">
    <property type="entry name" value="Ribosomal protein S7"/>
    <property type="match status" value="1"/>
</dbReference>
<dbReference type="PROSITE" id="PS00052">
    <property type="entry name" value="RIBOSOMAL_S7"/>
    <property type="match status" value="1"/>
</dbReference>
<feature type="chain" id="PRO_1000125929" description="Small ribosomal subunit protein uS7">
    <location>
        <begin position="1"/>
        <end position="157"/>
    </location>
</feature>
<comment type="function">
    <text evidence="1">One of the primary rRNA binding proteins, it binds directly to 16S rRNA where it nucleates assembly of the head domain of the 30S subunit. Is located at the subunit interface close to the decoding center, probably blocks exit of the E-site tRNA.</text>
</comment>
<comment type="subunit">
    <text evidence="1">Part of the 30S ribosomal subunit. Contacts proteins S9 and S11.</text>
</comment>
<comment type="similarity">
    <text evidence="1">Belongs to the universal ribosomal protein uS7 family.</text>
</comment>
<reference key="1">
    <citation type="submission" date="2007-11" db="EMBL/GenBank/DDBJ databases">
        <title>Complete sequence of Delftia acidovorans DSM 14801 / SPH-1.</title>
        <authorList>
            <person name="Copeland A."/>
            <person name="Lucas S."/>
            <person name="Lapidus A."/>
            <person name="Barry K."/>
            <person name="Glavina del Rio T."/>
            <person name="Dalin E."/>
            <person name="Tice H."/>
            <person name="Pitluck S."/>
            <person name="Lowry S."/>
            <person name="Clum A."/>
            <person name="Schmutz J."/>
            <person name="Larimer F."/>
            <person name="Land M."/>
            <person name="Hauser L."/>
            <person name="Kyrpides N."/>
            <person name="Kim E."/>
            <person name="Schleheck D."/>
            <person name="Richardson P."/>
        </authorList>
    </citation>
    <scope>NUCLEOTIDE SEQUENCE [LARGE SCALE GENOMIC DNA]</scope>
    <source>
        <strain>DSM 14801 / SPH-1</strain>
    </source>
</reference>
<sequence>MPRRREVPKREILPDPKFGNVELSKFMNVIMEGGKKAVAERIIYGALDLIQKKHPDKDPLEAFVVAINNVKPMVEVKSRRVGGANYQVPVEVRPVRRLALSMRWLKEAARKRGEKSMAQRLANELLEATEGRGGAMKRRDEVHRMAEANKAFSHFRF</sequence>